<name>GLMM_LEVBA</name>
<comment type="function">
    <text evidence="1">Catalyzes the conversion of glucosamine-6-phosphate to glucosamine-1-phosphate.</text>
</comment>
<comment type="catalytic activity">
    <reaction evidence="1">
        <text>alpha-D-glucosamine 1-phosphate = D-glucosamine 6-phosphate</text>
        <dbReference type="Rhea" id="RHEA:23424"/>
        <dbReference type="ChEBI" id="CHEBI:58516"/>
        <dbReference type="ChEBI" id="CHEBI:58725"/>
        <dbReference type="EC" id="5.4.2.10"/>
    </reaction>
</comment>
<comment type="cofactor">
    <cofactor evidence="1">
        <name>Mg(2+)</name>
        <dbReference type="ChEBI" id="CHEBI:18420"/>
    </cofactor>
    <text evidence="1">Binds 1 Mg(2+) ion per subunit.</text>
</comment>
<comment type="PTM">
    <text evidence="1">Activated by phosphorylation.</text>
</comment>
<comment type="similarity">
    <text evidence="1">Belongs to the phosphohexose mutase family.</text>
</comment>
<reference key="1">
    <citation type="journal article" date="2006" name="Proc. Natl. Acad. Sci. U.S.A.">
        <title>Comparative genomics of the lactic acid bacteria.</title>
        <authorList>
            <person name="Makarova K.S."/>
            <person name="Slesarev A."/>
            <person name="Wolf Y.I."/>
            <person name="Sorokin A."/>
            <person name="Mirkin B."/>
            <person name="Koonin E.V."/>
            <person name="Pavlov A."/>
            <person name="Pavlova N."/>
            <person name="Karamychev V."/>
            <person name="Polouchine N."/>
            <person name="Shakhova V."/>
            <person name="Grigoriev I."/>
            <person name="Lou Y."/>
            <person name="Rohksar D."/>
            <person name="Lucas S."/>
            <person name="Huang K."/>
            <person name="Goodstein D.M."/>
            <person name="Hawkins T."/>
            <person name="Plengvidhya V."/>
            <person name="Welker D."/>
            <person name="Hughes J."/>
            <person name="Goh Y."/>
            <person name="Benson A."/>
            <person name="Baldwin K."/>
            <person name="Lee J.-H."/>
            <person name="Diaz-Muniz I."/>
            <person name="Dosti B."/>
            <person name="Smeianov V."/>
            <person name="Wechter W."/>
            <person name="Barabote R."/>
            <person name="Lorca G."/>
            <person name="Altermann E."/>
            <person name="Barrangou R."/>
            <person name="Ganesan B."/>
            <person name="Xie Y."/>
            <person name="Rawsthorne H."/>
            <person name="Tamir D."/>
            <person name="Parker C."/>
            <person name="Breidt F."/>
            <person name="Broadbent J.R."/>
            <person name="Hutkins R."/>
            <person name="O'Sullivan D."/>
            <person name="Steele J."/>
            <person name="Unlu G."/>
            <person name="Saier M.H. Jr."/>
            <person name="Klaenhammer T."/>
            <person name="Richardson P."/>
            <person name="Kozyavkin S."/>
            <person name="Weimer B.C."/>
            <person name="Mills D.A."/>
        </authorList>
    </citation>
    <scope>NUCLEOTIDE SEQUENCE [LARGE SCALE GENOMIC DNA]</scope>
    <source>
        <strain>ATCC 367 / BCRC 12310 / CIP 105137 / JCM 1170 / LMG 11437 / NCIMB 947 / NCTC 947</strain>
    </source>
</reference>
<dbReference type="EC" id="5.4.2.10" evidence="1"/>
<dbReference type="EMBL" id="CP000416">
    <property type="protein sequence ID" value="ABJ63829.1"/>
    <property type="molecule type" value="Genomic_DNA"/>
</dbReference>
<dbReference type="RefSeq" id="WP_011667461.1">
    <property type="nucleotide sequence ID" value="NC_008497.1"/>
</dbReference>
<dbReference type="SMR" id="Q03SJ3"/>
<dbReference type="STRING" id="387344.LVIS_0686"/>
<dbReference type="KEGG" id="lbr:LVIS_0686"/>
<dbReference type="PATRIC" id="fig|387344.15.peg.663"/>
<dbReference type="eggNOG" id="COG1109">
    <property type="taxonomic scope" value="Bacteria"/>
</dbReference>
<dbReference type="HOGENOM" id="CLU_016950_7_0_9"/>
<dbReference type="Proteomes" id="UP000001652">
    <property type="component" value="Chromosome"/>
</dbReference>
<dbReference type="GO" id="GO:0005829">
    <property type="term" value="C:cytosol"/>
    <property type="evidence" value="ECO:0007669"/>
    <property type="project" value="TreeGrafter"/>
</dbReference>
<dbReference type="GO" id="GO:0000287">
    <property type="term" value="F:magnesium ion binding"/>
    <property type="evidence" value="ECO:0007669"/>
    <property type="project" value="UniProtKB-UniRule"/>
</dbReference>
<dbReference type="GO" id="GO:0008966">
    <property type="term" value="F:phosphoglucosamine mutase activity"/>
    <property type="evidence" value="ECO:0007669"/>
    <property type="project" value="UniProtKB-UniRule"/>
</dbReference>
<dbReference type="GO" id="GO:0004615">
    <property type="term" value="F:phosphomannomutase activity"/>
    <property type="evidence" value="ECO:0007669"/>
    <property type="project" value="TreeGrafter"/>
</dbReference>
<dbReference type="GO" id="GO:0005975">
    <property type="term" value="P:carbohydrate metabolic process"/>
    <property type="evidence" value="ECO:0007669"/>
    <property type="project" value="InterPro"/>
</dbReference>
<dbReference type="GO" id="GO:0009252">
    <property type="term" value="P:peptidoglycan biosynthetic process"/>
    <property type="evidence" value="ECO:0007669"/>
    <property type="project" value="TreeGrafter"/>
</dbReference>
<dbReference type="GO" id="GO:0006048">
    <property type="term" value="P:UDP-N-acetylglucosamine biosynthetic process"/>
    <property type="evidence" value="ECO:0007669"/>
    <property type="project" value="TreeGrafter"/>
</dbReference>
<dbReference type="CDD" id="cd05802">
    <property type="entry name" value="GlmM"/>
    <property type="match status" value="1"/>
</dbReference>
<dbReference type="FunFam" id="3.30.310.50:FF:000001">
    <property type="entry name" value="Phosphoglucosamine mutase"/>
    <property type="match status" value="1"/>
</dbReference>
<dbReference type="FunFam" id="3.40.120.10:FF:000001">
    <property type="entry name" value="Phosphoglucosamine mutase"/>
    <property type="match status" value="1"/>
</dbReference>
<dbReference type="FunFam" id="3.40.120.10:FF:000002">
    <property type="entry name" value="Phosphoglucosamine mutase"/>
    <property type="match status" value="1"/>
</dbReference>
<dbReference type="Gene3D" id="3.40.120.10">
    <property type="entry name" value="Alpha-D-Glucose-1,6-Bisphosphate, subunit A, domain 3"/>
    <property type="match status" value="3"/>
</dbReference>
<dbReference type="Gene3D" id="3.30.310.50">
    <property type="entry name" value="Alpha-D-phosphohexomutase, C-terminal domain"/>
    <property type="match status" value="1"/>
</dbReference>
<dbReference type="HAMAP" id="MF_01554_B">
    <property type="entry name" value="GlmM_B"/>
    <property type="match status" value="1"/>
</dbReference>
<dbReference type="InterPro" id="IPR005844">
    <property type="entry name" value="A-D-PHexomutase_a/b/a-I"/>
</dbReference>
<dbReference type="InterPro" id="IPR016055">
    <property type="entry name" value="A-D-PHexomutase_a/b/a-I/II/III"/>
</dbReference>
<dbReference type="InterPro" id="IPR005845">
    <property type="entry name" value="A-D-PHexomutase_a/b/a-II"/>
</dbReference>
<dbReference type="InterPro" id="IPR005846">
    <property type="entry name" value="A-D-PHexomutase_a/b/a-III"/>
</dbReference>
<dbReference type="InterPro" id="IPR005843">
    <property type="entry name" value="A-D-PHexomutase_C"/>
</dbReference>
<dbReference type="InterPro" id="IPR036900">
    <property type="entry name" value="A-D-PHexomutase_C_sf"/>
</dbReference>
<dbReference type="InterPro" id="IPR016066">
    <property type="entry name" value="A-D-PHexomutase_CS"/>
</dbReference>
<dbReference type="InterPro" id="IPR005841">
    <property type="entry name" value="Alpha-D-phosphohexomutase_SF"/>
</dbReference>
<dbReference type="InterPro" id="IPR006352">
    <property type="entry name" value="GlmM_bact"/>
</dbReference>
<dbReference type="InterPro" id="IPR050060">
    <property type="entry name" value="Phosphoglucosamine_mutase"/>
</dbReference>
<dbReference type="NCBIfam" id="TIGR01455">
    <property type="entry name" value="glmM"/>
    <property type="match status" value="1"/>
</dbReference>
<dbReference type="PANTHER" id="PTHR42946:SF1">
    <property type="entry name" value="PHOSPHOGLUCOMUTASE (ALPHA-D-GLUCOSE-1,6-BISPHOSPHATE-DEPENDENT)"/>
    <property type="match status" value="1"/>
</dbReference>
<dbReference type="PANTHER" id="PTHR42946">
    <property type="entry name" value="PHOSPHOHEXOSE MUTASE"/>
    <property type="match status" value="1"/>
</dbReference>
<dbReference type="Pfam" id="PF02878">
    <property type="entry name" value="PGM_PMM_I"/>
    <property type="match status" value="1"/>
</dbReference>
<dbReference type="Pfam" id="PF02879">
    <property type="entry name" value="PGM_PMM_II"/>
    <property type="match status" value="1"/>
</dbReference>
<dbReference type="Pfam" id="PF02880">
    <property type="entry name" value="PGM_PMM_III"/>
    <property type="match status" value="1"/>
</dbReference>
<dbReference type="Pfam" id="PF00408">
    <property type="entry name" value="PGM_PMM_IV"/>
    <property type="match status" value="1"/>
</dbReference>
<dbReference type="PRINTS" id="PR00509">
    <property type="entry name" value="PGMPMM"/>
</dbReference>
<dbReference type="SUPFAM" id="SSF55957">
    <property type="entry name" value="Phosphoglucomutase, C-terminal domain"/>
    <property type="match status" value="1"/>
</dbReference>
<dbReference type="SUPFAM" id="SSF53738">
    <property type="entry name" value="Phosphoglucomutase, first 3 domains"/>
    <property type="match status" value="3"/>
</dbReference>
<dbReference type="PROSITE" id="PS00710">
    <property type="entry name" value="PGM_PMM"/>
    <property type="match status" value="1"/>
</dbReference>
<keyword id="KW-0413">Isomerase</keyword>
<keyword id="KW-0460">Magnesium</keyword>
<keyword id="KW-0479">Metal-binding</keyword>
<keyword id="KW-0597">Phosphoprotein</keyword>
<keyword id="KW-1185">Reference proteome</keyword>
<protein>
    <recommendedName>
        <fullName evidence="1">Phosphoglucosamine mutase</fullName>
        <ecNumber evidence="1">5.4.2.10</ecNumber>
    </recommendedName>
</protein>
<feature type="chain" id="PRO_0000305645" description="Phosphoglucosamine mutase">
    <location>
        <begin position="1"/>
        <end position="451"/>
    </location>
</feature>
<feature type="active site" description="Phosphoserine intermediate" evidence="1">
    <location>
        <position position="103"/>
    </location>
</feature>
<feature type="binding site" description="via phosphate group" evidence="1">
    <location>
        <position position="103"/>
    </location>
    <ligand>
        <name>Mg(2+)</name>
        <dbReference type="ChEBI" id="CHEBI:18420"/>
    </ligand>
</feature>
<feature type="binding site" evidence="1">
    <location>
        <position position="243"/>
    </location>
    <ligand>
        <name>Mg(2+)</name>
        <dbReference type="ChEBI" id="CHEBI:18420"/>
    </ligand>
</feature>
<feature type="binding site" evidence="1">
    <location>
        <position position="245"/>
    </location>
    <ligand>
        <name>Mg(2+)</name>
        <dbReference type="ChEBI" id="CHEBI:18420"/>
    </ligand>
</feature>
<feature type="binding site" evidence="1">
    <location>
        <position position="247"/>
    </location>
    <ligand>
        <name>Mg(2+)</name>
        <dbReference type="ChEBI" id="CHEBI:18420"/>
    </ligand>
</feature>
<feature type="modified residue" description="Phosphoserine" evidence="1">
    <location>
        <position position="103"/>
    </location>
</feature>
<accession>Q03SJ3</accession>
<organism>
    <name type="scientific">Levilactobacillus brevis (strain ATCC 367 / BCRC 12310 / CIP 105137 / JCM 1170 / LMG 11437 / NCIMB 947 / NCTC 947)</name>
    <name type="common">Lactobacillus brevis</name>
    <dbReference type="NCBI Taxonomy" id="387344"/>
    <lineage>
        <taxon>Bacteria</taxon>
        <taxon>Bacillati</taxon>
        <taxon>Bacillota</taxon>
        <taxon>Bacilli</taxon>
        <taxon>Lactobacillales</taxon>
        <taxon>Lactobacillaceae</taxon>
        <taxon>Levilactobacillus</taxon>
    </lineage>
</organism>
<sequence>MKYFGTDGVRGVANQELTPELAFKVGRFGGYVLTQHADSQNAHPQVLVARDTRISGELLENALVAGLLSVGIEVLRLGVITTPAVAYLVRTQGAAAGVMITASHNPVEYNGIKYFGNDGYKLSDEMEEEIEALLDAPTDDLPRPTTDGLGTVEDYSEGSQKYIQFLEQTIADDLDGLHIAVDSANGSTSGLVSRLYADLNLDFDTIATTPNGLNINDQVGSTHPEQLQKFVVDQGAAIGLAFDGDGDRCIAVDEEGHLVDGDKIMYICGKYMAEHGRLKKDTIVTTVMSNLGMYKAMEAHDLQSVKTKVGDRYVVEEMRKSGYNLGGEQSGHIVFLDFNTTGDGLLTSLQLLHILKVTGKKLSELAADVKTYPQKLVNVKVSDKQAALTNPQVQAMIATVEKEMNGDGRVLVRPSGTEPLLRVMAEAPTEETVAAYVGRIADVVRAEVGVE</sequence>
<proteinExistence type="inferred from homology"/>
<evidence type="ECO:0000255" key="1">
    <source>
        <dbReference type="HAMAP-Rule" id="MF_01554"/>
    </source>
</evidence>
<gene>
    <name evidence="1" type="primary">glmM</name>
    <name type="ordered locus">LVIS_0686</name>
</gene>